<feature type="chain" id="PRO_0000060908" description="Cytochrome b">
    <location>
        <begin position="1"/>
        <end position="372"/>
    </location>
</feature>
<feature type="transmembrane region" description="Helical" evidence="2">
    <location>
        <begin position="25"/>
        <end position="45"/>
    </location>
</feature>
<feature type="transmembrane region" description="Helical" evidence="2">
    <location>
        <begin position="69"/>
        <end position="90"/>
    </location>
</feature>
<feature type="transmembrane region" description="Helical" evidence="2">
    <location>
        <begin position="105"/>
        <end position="125"/>
    </location>
</feature>
<feature type="transmembrane region" description="Helical" evidence="2">
    <location>
        <begin position="170"/>
        <end position="190"/>
    </location>
</feature>
<feature type="transmembrane region" description="Helical" evidence="2">
    <location>
        <begin position="218"/>
        <end position="238"/>
    </location>
</feature>
<feature type="transmembrane region" description="Helical" evidence="2">
    <location>
        <begin position="280"/>
        <end position="300"/>
    </location>
</feature>
<feature type="transmembrane region" description="Helical" evidence="2">
    <location>
        <begin position="312"/>
        <end position="332"/>
    </location>
</feature>
<feature type="transmembrane region" description="Helical" evidence="2">
    <location>
        <begin position="339"/>
        <end position="358"/>
    </location>
</feature>
<feature type="binding site" description="axial binding residue" evidence="2">
    <location>
        <position position="75"/>
    </location>
    <ligand>
        <name>heme b</name>
        <dbReference type="ChEBI" id="CHEBI:60344"/>
        <label>b562</label>
    </ligand>
    <ligandPart>
        <name>Fe</name>
        <dbReference type="ChEBI" id="CHEBI:18248"/>
    </ligandPart>
</feature>
<feature type="binding site" description="axial binding residue" evidence="2">
    <location>
        <position position="89"/>
    </location>
    <ligand>
        <name>heme b</name>
        <dbReference type="ChEBI" id="CHEBI:60344"/>
        <label>b566</label>
    </ligand>
    <ligandPart>
        <name>Fe</name>
        <dbReference type="ChEBI" id="CHEBI:18248"/>
    </ligandPart>
</feature>
<feature type="binding site" description="axial binding residue" evidence="2">
    <location>
        <position position="174"/>
    </location>
    <ligand>
        <name>heme b</name>
        <dbReference type="ChEBI" id="CHEBI:60344"/>
        <label>b562</label>
    </ligand>
    <ligandPart>
        <name>Fe</name>
        <dbReference type="ChEBI" id="CHEBI:18248"/>
    </ligandPart>
</feature>
<feature type="binding site" description="axial binding residue" evidence="2">
    <location>
        <position position="188"/>
    </location>
    <ligand>
        <name>heme b</name>
        <dbReference type="ChEBI" id="CHEBI:60344"/>
        <label>b566</label>
    </ligand>
    <ligandPart>
        <name>Fe</name>
        <dbReference type="ChEBI" id="CHEBI:18248"/>
    </ligandPart>
</feature>
<feature type="binding site" evidence="2">
    <location>
        <position position="193"/>
    </location>
    <ligand>
        <name>a ubiquinone</name>
        <dbReference type="ChEBI" id="CHEBI:16389"/>
    </ligand>
</feature>
<feature type="sequence variant">
    <original>S</original>
    <variation>P</variation>
    <location>
        <position position="2"/>
    </location>
</feature>
<feature type="sequence variant">
    <original>L</original>
    <variation>M</variation>
    <location>
        <position position="8"/>
    </location>
</feature>
<feature type="sequence variant">
    <original>W</original>
    <variation>G</variation>
    <location>
        <position position="23"/>
    </location>
</feature>
<feature type="sequence variant">
    <original>M</original>
    <variation>T</variation>
    <location>
        <position position="38"/>
    </location>
</feature>
<feature type="sequence variant">
    <original>N</original>
    <variation>S</variation>
    <location>
        <position position="103"/>
    </location>
</feature>
<feature type="sequence variant">
    <original>T</original>
    <variation>M</variation>
    <location>
        <position position="110"/>
    </location>
</feature>
<feature type="sequence variant">
    <original>I</original>
    <variation>M</variation>
    <location>
        <position position="148"/>
    </location>
</feature>
<feature type="sequence variant">
    <original>H</original>
    <variation>Y</variation>
    <location>
        <position position="218"/>
    </location>
</feature>
<feature type="sequence variant">
    <original>I</original>
    <variation>M</variation>
    <location>
        <position position="226"/>
    </location>
</feature>
<feature type="sequence variant">
    <original>I</original>
    <variation>T</variation>
    <location>
        <position position="226"/>
    </location>
</feature>
<feature type="sequence variant">
    <original>A</original>
    <variation>T</variation>
    <location>
        <position position="230"/>
    </location>
</feature>
<feature type="sequence variant">
    <original>S</original>
    <variation>F</variation>
    <location>
        <position position="236"/>
    </location>
</feature>
<feature type="sequence variant">
    <original>M</original>
    <variation>T</variation>
    <location>
        <position position="238"/>
    </location>
</feature>
<feature type="sequence variant">
    <original>P</original>
    <variation>S</variation>
    <location>
        <position position="245"/>
    </location>
</feature>
<feature type="sequence variant">
    <original>F</original>
    <variation>Y</variation>
    <location>
        <position position="298"/>
    </location>
</feature>
<feature type="sequence variant">
    <original>F</original>
    <variation>M</variation>
    <location>
        <position position="304"/>
    </location>
</feature>
<feature type="sequence variant">
    <original>T</original>
    <variation>M</variation>
    <location>
        <position position="308"/>
    </location>
</feature>
<feature type="sequence variant">
    <original>F</original>
    <variation>L</variation>
    <location>
        <position position="315"/>
    </location>
</feature>
<feature type="sequence variant">
    <original>T</original>
    <variation>A</variation>
    <location>
        <position position="319"/>
    </location>
</feature>
<feature type="sequence variant">
    <original>L</original>
    <variation>M</variation>
    <location>
        <position position="320"/>
    </location>
</feature>
<feature type="sequence variant">
    <original>F</original>
    <variation>L</variation>
    <location>
        <position position="324"/>
    </location>
</feature>
<feature type="sequence variant">
    <original>V</original>
    <variation>M</variation>
    <location>
        <position position="335"/>
    </location>
</feature>
<feature type="sequence variant">
    <original>A</original>
    <variation>V</variation>
    <location>
        <position position="345"/>
    </location>
</feature>
<feature type="sequence variant">
    <original>I</original>
    <variation>S</variation>
    <location>
        <position position="348"/>
    </location>
</feature>
<feature type="sequence variant">
    <original>T</original>
    <variation>M</variation>
    <location>
        <position position="352"/>
    </location>
</feature>
<protein>
    <recommendedName>
        <fullName>Cytochrome b</fullName>
    </recommendedName>
    <alternativeName>
        <fullName>Complex III subunit 3</fullName>
    </alternativeName>
    <alternativeName>
        <fullName>Complex III subunit III</fullName>
    </alternativeName>
    <alternativeName>
        <fullName>Cytochrome b-c1 complex subunit 3</fullName>
    </alternativeName>
    <alternativeName>
        <fullName>Ubiquinol-cytochrome-c reductase complex cytochrome b subunit</fullName>
    </alternativeName>
</protein>
<evidence type="ECO:0000250" key="1"/>
<evidence type="ECO:0000250" key="2">
    <source>
        <dbReference type="UniProtKB" id="P00157"/>
    </source>
</evidence>
<evidence type="ECO:0000255" key="3">
    <source>
        <dbReference type="PROSITE-ProRule" id="PRU00967"/>
    </source>
</evidence>
<evidence type="ECO:0000255" key="4">
    <source>
        <dbReference type="PROSITE-ProRule" id="PRU00968"/>
    </source>
</evidence>
<geneLocation type="mitochondrion"/>
<dbReference type="EMBL" id="AF283577">
    <property type="protein sequence ID" value="AAG26393.1"/>
    <property type="molecule type" value="Genomic_DNA"/>
</dbReference>
<dbReference type="EMBL" id="AF283578">
    <property type="protein sequence ID" value="AAG26394.1"/>
    <property type="molecule type" value="Genomic_DNA"/>
</dbReference>
<dbReference type="EMBL" id="AF283579">
    <property type="protein sequence ID" value="AAG26395.1"/>
    <property type="molecule type" value="Genomic_DNA"/>
</dbReference>
<dbReference type="EMBL" id="AF283580">
    <property type="protein sequence ID" value="AAG26396.1"/>
    <property type="molecule type" value="Genomic_DNA"/>
</dbReference>
<dbReference type="EMBL" id="AF283581">
    <property type="protein sequence ID" value="AAG26397.1"/>
    <property type="molecule type" value="Genomic_DNA"/>
</dbReference>
<dbReference type="EMBL" id="AF283582">
    <property type="protein sequence ID" value="AAG26398.1"/>
    <property type="molecule type" value="Genomic_DNA"/>
</dbReference>
<dbReference type="EMBL" id="AF283583">
    <property type="protein sequence ID" value="AAG26399.1"/>
    <property type="molecule type" value="Genomic_DNA"/>
</dbReference>
<dbReference type="EMBL" id="AF283584">
    <property type="protein sequence ID" value="AAG26400.1"/>
    <property type="molecule type" value="Genomic_DNA"/>
</dbReference>
<dbReference type="EMBL" id="AF283585">
    <property type="protein sequence ID" value="AAG26401.1"/>
    <property type="molecule type" value="Genomic_DNA"/>
</dbReference>
<dbReference type="EMBL" id="AF283586">
    <property type="protein sequence ID" value="AAG26402.1"/>
    <property type="molecule type" value="Genomic_DNA"/>
</dbReference>
<dbReference type="EMBL" id="AF283587">
    <property type="protein sequence ID" value="AAG26403.1"/>
    <property type="molecule type" value="Genomic_DNA"/>
</dbReference>
<dbReference type="EMBL" id="AF283588">
    <property type="protein sequence ID" value="AAG26404.1"/>
    <property type="molecule type" value="Genomic_DNA"/>
</dbReference>
<dbReference type="EMBL" id="AF283589">
    <property type="protein sequence ID" value="AAG26405.1"/>
    <property type="molecule type" value="Genomic_DNA"/>
</dbReference>
<dbReference type="EMBL" id="AF283590">
    <property type="protein sequence ID" value="AAG26406.1"/>
    <property type="molecule type" value="Genomic_DNA"/>
</dbReference>
<dbReference type="EMBL" id="AF283591">
    <property type="protein sequence ID" value="AAG26407.1"/>
    <property type="molecule type" value="Genomic_DNA"/>
</dbReference>
<dbReference type="EMBL" id="AF283592">
    <property type="protein sequence ID" value="AAG26408.1"/>
    <property type="molecule type" value="Genomic_DNA"/>
</dbReference>
<dbReference type="EMBL" id="AF283593">
    <property type="protein sequence ID" value="AAG26409.1"/>
    <property type="molecule type" value="Genomic_DNA"/>
</dbReference>
<dbReference type="EMBL" id="AF283594">
    <property type="protein sequence ID" value="AAG26410.1"/>
    <property type="molecule type" value="Genomic_DNA"/>
</dbReference>
<dbReference type="EMBL" id="AF283595">
    <property type="protein sequence ID" value="AAG26411.1"/>
    <property type="molecule type" value="Genomic_DNA"/>
</dbReference>
<dbReference type="EMBL" id="AF283596">
    <property type="protein sequence ID" value="AAG26412.1"/>
    <property type="molecule type" value="Genomic_DNA"/>
</dbReference>
<dbReference type="EMBL" id="AF283597">
    <property type="protein sequence ID" value="AAG26413.1"/>
    <property type="molecule type" value="Genomic_DNA"/>
</dbReference>
<dbReference type="EMBL" id="AF283601">
    <property type="protein sequence ID" value="AAG26417.1"/>
    <property type="molecule type" value="Genomic_DNA"/>
</dbReference>
<dbReference type="EMBL" id="AF283602">
    <property type="protein sequence ID" value="AAG26418.1"/>
    <property type="molecule type" value="Genomic_DNA"/>
</dbReference>
<dbReference type="EMBL" id="AF283603">
    <property type="protein sequence ID" value="AAG26419.1"/>
    <property type="molecule type" value="Genomic_DNA"/>
</dbReference>
<dbReference type="EMBL" id="AF283604">
    <property type="protein sequence ID" value="AAG26420.1"/>
    <property type="molecule type" value="Genomic_DNA"/>
</dbReference>
<dbReference type="EMBL" id="AF283605">
    <property type="protein sequence ID" value="AAG26421.1"/>
    <property type="molecule type" value="Genomic_DNA"/>
</dbReference>
<dbReference type="EMBL" id="AF283606">
    <property type="protein sequence ID" value="AAG26422.1"/>
    <property type="molecule type" value="Genomic_DNA"/>
</dbReference>
<dbReference type="EMBL" id="AF283607">
    <property type="protein sequence ID" value="AAG26423.1"/>
    <property type="molecule type" value="Genomic_DNA"/>
</dbReference>
<dbReference type="EMBL" id="AF283608">
    <property type="protein sequence ID" value="AAG26424.1"/>
    <property type="molecule type" value="Genomic_DNA"/>
</dbReference>
<dbReference type="EMBL" id="AF283609">
    <property type="protein sequence ID" value="AAG26425.1"/>
    <property type="molecule type" value="Genomic_DNA"/>
</dbReference>
<dbReference type="EMBL" id="AF283610">
    <property type="protein sequence ID" value="AAG26426.1"/>
    <property type="molecule type" value="Genomic_DNA"/>
</dbReference>
<dbReference type="EMBL" id="AF283611">
    <property type="protein sequence ID" value="AAG26427.1"/>
    <property type="molecule type" value="Genomic_DNA"/>
</dbReference>
<dbReference type="EMBL" id="AF283612">
    <property type="protein sequence ID" value="AAG26428.1"/>
    <property type="molecule type" value="Genomic_DNA"/>
</dbReference>
<dbReference type="EMBL" id="AF283613">
    <property type="protein sequence ID" value="AAG26429.1"/>
    <property type="molecule type" value="Genomic_DNA"/>
</dbReference>
<dbReference type="EMBL" id="AF283614">
    <property type="protein sequence ID" value="AAG26430.1"/>
    <property type="molecule type" value="Genomic_DNA"/>
</dbReference>
<dbReference type="EMBL" id="AF283615">
    <property type="protein sequence ID" value="AAG26431.1"/>
    <property type="molecule type" value="Genomic_DNA"/>
</dbReference>
<dbReference type="EMBL" id="AF283616">
    <property type="protein sequence ID" value="AAG26432.1"/>
    <property type="molecule type" value="Genomic_DNA"/>
</dbReference>
<dbReference type="EMBL" id="AF283617">
    <property type="protein sequence ID" value="AAG26433.1"/>
    <property type="molecule type" value="Genomic_DNA"/>
</dbReference>
<dbReference type="EMBL" id="AF283618">
    <property type="protein sequence ID" value="AAG26434.1"/>
    <property type="molecule type" value="Genomic_DNA"/>
</dbReference>
<dbReference type="EMBL" id="AF283619">
    <property type="protein sequence ID" value="AAG26435.1"/>
    <property type="molecule type" value="Genomic_DNA"/>
</dbReference>
<dbReference type="EMBL" id="AF283620">
    <property type="protein sequence ID" value="AAG26436.1"/>
    <property type="molecule type" value="Genomic_DNA"/>
</dbReference>
<dbReference type="EMBL" id="AF283621">
    <property type="protein sequence ID" value="AAG26437.1"/>
    <property type="molecule type" value="Genomic_DNA"/>
</dbReference>
<dbReference type="EMBL" id="AF283623">
    <property type="protein sequence ID" value="AAG26439.1"/>
    <property type="molecule type" value="Genomic_DNA"/>
</dbReference>
<dbReference type="EMBL" id="AF283624">
    <property type="protein sequence ID" value="AAG26440.1"/>
    <property type="molecule type" value="Genomic_DNA"/>
</dbReference>
<dbReference type="EMBL" id="AF283625">
    <property type="protein sequence ID" value="AAG26441.1"/>
    <property type="molecule type" value="Genomic_DNA"/>
</dbReference>
<dbReference type="EMBL" id="AF283626">
    <property type="protein sequence ID" value="AAG26442.1"/>
    <property type="molecule type" value="Genomic_DNA"/>
</dbReference>
<dbReference type="EMBL" id="AF283627">
    <property type="protein sequence ID" value="AAG26443.1"/>
    <property type="molecule type" value="Genomic_DNA"/>
</dbReference>
<dbReference type="EMBL" id="AF283628">
    <property type="protein sequence ID" value="AAG26444.1"/>
    <property type="molecule type" value="Genomic_DNA"/>
</dbReference>
<dbReference type="EMBL" id="AF283629">
    <property type="protein sequence ID" value="AAG26445.1"/>
    <property type="molecule type" value="Genomic_DNA"/>
</dbReference>
<dbReference type="EMBL" id="AF283630">
    <property type="protein sequence ID" value="AAG26446.1"/>
    <property type="molecule type" value="Genomic_DNA"/>
</dbReference>
<dbReference type="EMBL" id="AF283631">
    <property type="protein sequence ID" value="AAG26447.1"/>
    <property type="molecule type" value="Genomic_DNA"/>
</dbReference>
<dbReference type="EMBL" id="AF283632">
    <property type="protein sequence ID" value="AAG26448.1"/>
    <property type="molecule type" value="Genomic_DNA"/>
</dbReference>
<dbReference type="EMBL" id="AF283633">
    <property type="protein sequence ID" value="AAG26449.1"/>
    <property type="molecule type" value="Genomic_DNA"/>
</dbReference>
<dbReference type="EMBL" id="AF283634">
    <property type="protein sequence ID" value="AAG26450.1"/>
    <property type="molecule type" value="Genomic_DNA"/>
</dbReference>
<dbReference type="EMBL" id="AF283635">
    <property type="protein sequence ID" value="AAG26451.1"/>
    <property type="molecule type" value="Genomic_DNA"/>
</dbReference>
<dbReference type="EMBL" id="AF283637">
    <property type="protein sequence ID" value="AAG26453.1"/>
    <property type="molecule type" value="Genomic_DNA"/>
</dbReference>
<dbReference type="EMBL" id="AF283640">
    <property type="protein sequence ID" value="AAG26456.1"/>
    <property type="molecule type" value="Genomic_DNA"/>
</dbReference>
<dbReference type="EMBL" id="AF283641">
    <property type="protein sequence ID" value="AAG26457.1"/>
    <property type="molecule type" value="Genomic_DNA"/>
</dbReference>
<dbReference type="EMBL" id="AF283642">
    <property type="protein sequence ID" value="AAG26458.1"/>
    <property type="molecule type" value="Genomic_DNA"/>
</dbReference>
<dbReference type="EMBL" id="AF283643">
    <property type="protein sequence ID" value="AAG26459.1"/>
    <property type="molecule type" value="Genomic_DNA"/>
</dbReference>
<dbReference type="EMBL" id="AF283644">
    <property type="protein sequence ID" value="AAG26460.1"/>
    <property type="molecule type" value="Genomic_DNA"/>
</dbReference>
<dbReference type="SMR" id="Q9G210"/>
<dbReference type="GO" id="GO:0005743">
    <property type="term" value="C:mitochondrial inner membrane"/>
    <property type="evidence" value="ECO:0007669"/>
    <property type="project" value="UniProtKB-SubCell"/>
</dbReference>
<dbReference type="GO" id="GO:0045275">
    <property type="term" value="C:respiratory chain complex III"/>
    <property type="evidence" value="ECO:0007669"/>
    <property type="project" value="InterPro"/>
</dbReference>
<dbReference type="GO" id="GO:0046872">
    <property type="term" value="F:metal ion binding"/>
    <property type="evidence" value="ECO:0007669"/>
    <property type="project" value="UniProtKB-KW"/>
</dbReference>
<dbReference type="GO" id="GO:0008121">
    <property type="term" value="F:ubiquinol-cytochrome-c reductase activity"/>
    <property type="evidence" value="ECO:0007669"/>
    <property type="project" value="InterPro"/>
</dbReference>
<dbReference type="GO" id="GO:0006122">
    <property type="term" value="P:mitochondrial electron transport, ubiquinol to cytochrome c"/>
    <property type="evidence" value="ECO:0007669"/>
    <property type="project" value="TreeGrafter"/>
</dbReference>
<dbReference type="CDD" id="cd00290">
    <property type="entry name" value="cytochrome_b_C"/>
    <property type="match status" value="1"/>
</dbReference>
<dbReference type="CDD" id="cd00284">
    <property type="entry name" value="Cytochrome_b_N"/>
    <property type="match status" value="1"/>
</dbReference>
<dbReference type="Gene3D" id="1.20.810.10">
    <property type="entry name" value="Cytochrome Bc1 Complex, Chain C"/>
    <property type="match status" value="1"/>
</dbReference>
<dbReference type="InterPro" id="IPR005798">
    <property type="entry name" value="Cyt_b/b6_C"/>
</dbReference>
<dbReference type="InterPro" id="IPR036150">
    <property type="entry name" value="Cyt_b/b6_C_sf"/>
</dbReference>
<dbReference type="InterPro" id="IPR005797">
    <property type="entry name" value="Cyt_b/b6_N"/>
</dbReference>
<dbReference type="InterPro" id="IPR027387">
    <property type="entry name" value="Cytb/b6-like_sf"/>
</dbReference>
<dbReference type="InterPro" id="IPR030689">
    <property type="entry name" value="Cytochrome_b"/>
</dbReference>
<dbReference type="InterPro" id="IPR048260">
    <property type="entry name" value="Cytochrome_b_C_euk/bac"/>
</dbReference>
<dbReference type="InterPro" id="IPR048259">
    <property type="entry name" value="Cytochrome_b_N_euk/bac"/>
</dbReference>
<dbReference type="InterPro" id="IPR016174">
    <property type="entry name" value="Di-haem_cyt_TM"/>
</dbReference>
<dbReference type="PANTHER" id="PTHR19271">
    <property type="entry name" value="CYTOCHROME B"/>
    <property type="match status" value="1"/>
</dbReference>
<dbReference type="PANTHER" id="PTHR19271:SF16">
    <property type="entry name" value="CYTOCHROME B"/>
    <property type="match status" value="1"/>
</dbReference>
<dbReference type="Pfam" id="PF00032">
    <property type="entry name" value="Cytochrom_B_C"/>
    <property type="match status" value="1"/>
</dbReference>
<dbReference type="Pfam" id="PF00033">
    <property type="entry name" value="Cytochrome_B"/>
    <property type="match status" value="1"/>
</dbReference>
<dbReference type="PIRSF" id="PIRSF038885">
    <property type="entry name" value="COB"/>
    <property type="match status" value="1"/>
</dbReference>
<dbReference type="SUPFAM" id="SSF81648">
    <property type="entry name" value="a domain/subunit of cytochrome bc1 complex (Ubiquinol-cytochrome c reductase)"/>
    <property type="match status" value="1"/>
</dbReference>
<dbReference type="SUPFAM" id="SSF81342">
    <property type="entry name" value="Transmembrane di-heme cytochromes"/>
    <property type="match status" value="1"/>
</dbReference>
<dbReference type="PROSITE" id="PS51003">
    <property type="entry name" value="CYTB_CTER"/>
    <property type="match status" value="1"/>
</dbReference>
<dbReference type="PROSITE" id="PS51002">
    <property type="entry name" value="CYTB_NTER"/>
    <property type="match status" value="1"/>
</dbReference>
<comment type="function">
    <text evidence="2">Component of the ubiquinol-cytochrome c reductase complex (complex III or cytochrome b-c1 complex) that is part of the mitochondrial respiratory chain. The b-c1 complex mediates electron transfer from ubiquinol to cytochrome c. Contributes to the generation of a proton gradient across the mitochondrial membrane that is then used for ATP synthesis.</text>
</comment>
<comment type="cofactor">
    <cofactor evidence="2">
        <name>heme b</name>
        <dbReference type="ChEBI" id="CHEBI:60344"/>
    </cofactor>
    <text evidence="2">Binds 2 heme b groups non-covalently.</text>
</comment>
<comment type="subunit">
    <text evidence="2">The cytochrome bc1 complex contains 3 respiratory subunits (MT-CYB, CYC1 and UQCRFS1), 2 core proteins (UQCRC1 and UQCRC2) and probably 6 low-molecular weight proteins.</text>
</comment>
<comment type="subcellular location">
    <subcellularLocation>
        <location evidence="2">Mitochondrion inner membrane</location>
        <topology evidence="2">Multi-pass membrane protein</topology>
    </subcellularLocation>
</comment>
<comment type="miscellaneous">
    <text evidence="1">Heme 1 (or BL or b562) is low-potential and absorbs at about 562 nm, and heme 2 (or BH or b566) is high-potential and absorbs at about 566 nm.</text>
</comment>
<comment type="similarity">
    <text evidence="3 4">Belongs to the cytochrome b family.</text>
</comment>
<comment type="caution">
    <text evidence="2">The full-length protein contains only eight transmembrane helices, not nine as predicted by bioinformatics tools.</text>
</comment>
<organism>
    <name type="scientific">Pantherophis obsoletus</name>
    <name type="common">Black ratsnake</name>
    <name type="synonym">Elaphe obsoleta</name>
    <dbReference type="NCBI Taxonomy" id="39099"/>
    <lineage>
        <taxon>Eukaryota</taxon>
        <taxon>Metazoa</taxon>
        <taxon>Chordata</taxon>
        <taxon>Craniata</taxon>
        <taxon>Vertebrata</taxon>
        <taxon>Euteleostomi</taxon>
        <taxon>Lepidosauria</taxon>
        <taxon>Squamata</taxon>
        <taxon>Bifurcata</taxon>
        <taxon>Unidentata</taxon>
        <taxon>Episquamata</taxon>
        <taxon>Toxicofera</taxon>
        <taxon>Serpentes</taxon>
        <taxon>Colubroidea</taxon>
        <taxon>Colubridae</taxon>
        <taxon>Colubrinae</taxon>
        <taxon>Pantherophis</taxon>
    </lineage>
</organism>
<reference key="1">
    <citation type="journal article" date="2000" name="Evolution">
        <title>Mitochondrial DNA phylogeography of the polytypic North American rat snake (Elaphe obsoleta): a critique of the subspecies concept.</title>
        <authorList>
            <person name="Burbrink F.T."/>
            <person name="Lawson R."/>
            <person name="Slowinski J.B."/>
        </authorList>
    </citation>
    <scope>NUCLEOTIDE SEQUENCE [GENOMIC DNA]</scope>
</reference>
<keyword id="KW-0249">Electron transport</keyword>
<keyword id="KW-0349">Heme</keyword>
<keyword id="KW-0408">Iron</keyword>
<keyword id="KW-0472">Membrane</keyword>
<keyword id="KW-0479">Metal-binding</keyword>
<keyword id="KW-0496">Mitochondrion</keyword>
<keyword id="KW-0999">Mitochondrion inner membrane</keyword>
<keyword id="KW-0679">Respiratory chain</keyword>
<keyword id="KW-0812">Transmembrane</keyword>
<keyword id="KW-1133">Transmembrane helix</keyword>
<keyword id="KW-0813">Transport</keyword>
<keyword id="KW-0830">Ubiquinone</keyword>
<gene>
    <name type="primary">MT-CYB</name>
    <name type="synonym">COB</name>
    <name type="synonym">CYTB</name>
    <name type="synonym">MTCYB</name>
</gene>
<accession>Q9G210</accession>
<accession>Q9G167</accession>
<accession>Q9G1B2</accession>
<accession>Q9G1B3</accession>
<accession>Q9G1B4</accession>
<accession>Q9G1R9</accession>
<accession>Q9G1Z8</accession>
<accession>Q9G965</accession>
<accession>Q9G966</accession>
<accession>Q9G967</accession>
<accession>Q9G968</accession>
<accession>Q9G969</accession>
<accession>Q9G970</accession>
<accession>Q9G971</accession>
<accession>Q9G972</accession>
<accession>Q9G973</accession>
<accession>Q9G974</accession>
<accession>Q9G975</accession>
<accession>Q9G976</accession>
<accession>Q9G977</accession>
<accession>Q9G978</accession>
<name>CYB_PANOS</name>
<sequence>MSNQHMLLLFNLLPVGSNISTWWNFGSMLLTCLALQTMTGFFLAIHYTANINLAFSSIVHITRDVPYGWMMQNLHAIGASMFFICIYIHIARGLYYGSFLNKNVWLSGTTLLIILMATAFFGYVLPWGQMSFWAATVITNLLTAVPYIGTELTNWLWGGFSINDPTLTRFFALHFILPFTIISMSSIHIMLLHTEGSSNPLGTNSDIDKIPFHPYHSHKDMLMLTIMMTALFIIMSFMPNIFNDPENFSKANPLVTPQHIKPEWYFLFAYGILRSIPNKLGGTVALVLSVTILMTMPFTHTSHFRSMTFRPLMQFMFWTLVATFITITWAATKPVEPPFTTIGQATAILYFTFFIMNPLLGWLENKISITNM</sequence>
<proteinExistence type="inferred from homology"/>